<keyword id="KW-0378">Hydrolase</keyword>
<keyword id="KW-0479">Metal-binding</keyword>
<keyword id="KW-0665">Pyrimidine biosynthesis</keyword>
<keyword id="KW-1185">Reference proteome</keyword>
<keyword id="KW-0862">Zinc</keyword>
<evidence type="ECO:0000255" key="1">
    <source>
        <dbReference type="HAMAP-Rule" id="MF_00220"/>
    </source>
</evidence>
<sequence>MRIVIKNGIVIDGFGGEEKADILINYGIIKGIDKNIDVSDAIVIDAEGKYVLPGFVDMHTHLRQPGFEEKETIRTGTESAAAGGFTTVACMPNTNPPIDSEVVVEYVKAVAQREGVVKVLPIGAMTKGMKGEEITEMAKLKKAGVVALSDDGFPIMSAGIMKRVMTYGKMYDLLMITHCEDKTLSGEGVMNSGIIATMLGLKGIPREAEEVMLARNIILAKATGAKLHIAHVSTKGSVELIRRAKEEGVSITAEVTPHHLTRTDEAVYNYDTNTKVFPPLRTREDVEALIEGLKDGTIDAIATDHAPHTKDDKKVPYDMAPFGISGLETAFSVINTFLIQTGIITMKALVNYMSMNPARILGISNGIRVGATADIVIVNPHEEYTVDKEKFKSKGKNTPYHGMKLKGVVEYTIVEGQIRYQKNKKFEKVEI</sequence>
<comment type="function">
    <text evidence="1">Catalyzes the reversible cyclization of carbamoyl aspartate to dihydroorotate.</text>
</comment>
<comment type="catalytic activity">
    <reaction evidence="1">
        <text>(S)-dihydroorotate + H2O = N-carbamoyl-L-aspartate + H(+)</text>
        <dbReference type="Rhea" id="RHEA:24296"/>
        <dbReference type="ChEBI" id="CHEBI:15377"/>
        <dbReference type="ChEBI" id="CHEBI:15378"/>
        <dbReference type="ChEBI" id="CHEBI:30864"/>
        <dbReference type="ChEBI" id="CHEBI:32814"/>
        <dbReference type="EC" id="3.5.2.3"/>
    </reaction>
</comment>
<comment type="cofactor">
    <cofactor evidence="1">
        <name>Zn(2+)</name>
        <dbReference type="ChEBI" id="CHEBI:29105"/>
    </cofactor>
    <text evidence="1">Binds 2 Zn(2+) ions per subunit.</text>
</comment>
<comment type="pathway">
    <text evidence="1">Pyrimidine metabolism; UMP biosynthesis via de novo pathway; (S)-dihydroorotate from bicarbonate: step 3/3.</text>
</comment>
<comment type="similarity">
    <text evidence="1">Belongs to the metallo-dependent hydrolases superfamily. DHOase family. Class I DHOase subfamily.</text>
</comment>
<name>PYRC_CALS4</name>
<accession>Q8R9R6</accession>
<dbReference type="EC" id="3.5.2.3" evidence="1"/>
<dbReference type="EMBL" id="AE008691">
    <property type="protein sequence ID" value="AAM24744.1"/>
    <property type="molecule type" value="Genomic_DNA"/>
</dbReference>
<dbReference type="RefSeq" id="WP_011025781.1">
    <property type="nucleotide sequence ID" value="NC_003869.1"/>
</dbReference>
<dbReference type="SMR" id="Q8R9R6"/>
<dbReference type="STRING" id="273068.TTE1533"/>
<dbReference type="KEGG" id="tte:TTE1533"/>
<dbReference type="eggNOG" id="COG0044">
    <property type="taxonomic scope" value="Bacteria"/>
</dbReference>
<dbReference type="HOGENOM" id="CLU_015572_1_0_9"/>
<dbReference type="OrthoDB" id="9765462at2"/>
<dbReference type="UniPathway" id="UPA00070">
    <property type="reaction ID" value="UER00117"/>
</dbReference>
<dbReference type="Proteomes" id="UP000000555">
    <property type="component" value="Chromosome"/>
</dbReference>
<dbReference type="GO" id="GO:0005737">
    <property type="term" value="C:cytoplasm"/>
    <property type="evidence" value="ECO:0007669"/>
    <property type="project" value="TreeGrafter"/>
</dbReference>
<dbReference type="GO" id="GO:0004038">
    <property type="term" value="F:allantoinase activity"/>
    <property type="evidence" value="ECO:0007669"/>
    <property type="project" value="TreeGrafter"/>
</dbReference>
<dbReference type="GO" id="GO:0004151">
    <property type="term" value="F:dihydroorotase activity"/>
    <property type="evidence" value="ECO:0007669"/>
    <property type="project" value="UniProtKB-UniRule"/>
</dbReference>
<dbReference type="GO" id="GO:0008270">
    <property type="term" value="F:zinc ion binding"/>
    <property type="evidence" value="ECO:0007669"/>
    <property type="project" value="UniProtKB-UniRule"/>
</dbReference>
<dbReference type="GO" id="GO:0044205">
    <property type="term" value="P:'de novo' UMP biosynthetic process"/>
    <property type="evidence" value="ECO:0007669"/>
    <property type="project" value="UniProtKB-UniRule"/>
</dbReference>
<dbReference type="GO" id="GO:0006145">
    <property type="term" value="P:purine nucleobase catabolic process"/>
    <property type="evidence" value="ECO:0007669"/>
    <property type="project" value="TreeGrafter"/>
</dbReference>
<dbReference type="CDD" id="cd01317">
    <property type="entry name" value="DHOase_IIa"/>
    <property type="match status" value="1"/>
</dbReference>
<dbReference type="Gene3D" id="3.20.20.140">
    <property type="entry name" value="Metal-dependent hydrolases"/>
    <property type="match status" value="1"/>
</dbReference>
<dbReference type="Gene3D" id="2.30.40.10">
    <property type="entry name" value="Urease, subunit C, domain 1"/>
    <property type="match status" value="1"/>
</dbReference>
<dbReference type="HAMAP" id="MF_00220_B">
    <property type="entry name" value="PyrC_classI_B"/>
    <property type="match status" value="1"/>
</dbReference>
<dbReference type="InterPro" id="IPR006680">
    <property type="entry name" value="Amidohydro-rel"/>
</dbReference>
<dbReference type="InterPro" id="IPR004722">
    <property type="entry name" value="DHOase"/>
</dbReference>
<dbReference type="InterPro" id="IPR050138">
    <property type="entry name" value="DHOase/Allantoinase_Hydrolase"/>
</dbReference>
<dbReference type="InterPro" id="IPR002195">
    <property type="entry name" value="Dihydroorotase_CS"/>
</dbReference>
<dbReference type="InterPro" id="IPR011059">
    <property type="entry name" value="Metal-dep_hydrolase_composite"/>
</dbReference>
<dbReference type="InterPro" id="IPR032466">
    <property type="entry name" value="Metal_Hydrolase"/>
</dbReference>
<dbReference type="NCBIfam" id="NF006843">
    <property type="entry name" value="PRK09357.2-4"/>
    <property type="match status" value="1"/>
</dbReference>
<dbReference type="NCBIfam" id="TIGR00857">
    <property type="entry name" value="pyrC_multi"/>
    <property type="match status" value="1"/>
</dbReference>
<dbReference type="PANTHER" id="PTHR43668">
    <property type="entry name" value="ALLANTOINASE"/>
    <property type="match status" value="1"/>
</dbReference>
<dbReference type="PANTHER" id="PTHR43668:SF2">
    <property type="entry name" value="ALLANTOINASE"/>
    <property type="match status" value="1"/>
</dbReference>
<dbReference type="Pfam" id="PF01979">
    <property type="entry name" value="Amidohydro_1"/>
    <property type="match status" value="1"/>
</dbReference>
<dbReference type="SUPFAM" id="SSF51338">
    <property type="entry name" value="Composite domain of metallo-dependent hydrolases"/>
    <property type="match status" value="1"/>
</dbReference>
<dbReference type="SUPFAM" id="SSF51556">
    <property type="entry name" value="Metallo-dependent hydrolases"/>
    <property type="match status" value="1"/>
</dbReference>
<dbReference type="PROSITE" id="PS00483">
    <property type="entry name" value="DIHYDROOROTASE_2"/>
    <property type="match status" value="1"/>
</dbReference>
<reference key="1">
    <citation type="journal article" date="2002" name="Genome Res.">
        <title>A complete sequence of the T. tengcongensis genome.</title>
        <authorList>
            <person name="Bao Q."/>
            <person name="Tian Y."/>
            <person name="Li W."/>
            <person name="Xu Z."/>
            <person name="Xuan Z."/>
            <person name="Hu S."/>
            <person name="Dong W."/>
            <person name="Yang J."/>
            <person name="Chen Y."/>
            <person name="Xue Y."/>
            <person name="Xu Y."/>
            <person name="Lai X."/>
            <person name="Huang L."/>
            <person name="Dong X."/>
            <person name="Ma Y."/>
            <person name="Ling L."/>
            <person name="Tan H."/>
            <person name="Chen R."/>
            <person name="Wang J."/>
            <person name="Yu J."/>
            <person name="Yang H."/>
        </authorList>
    </citation>
    <scope>NUCLEOTIDE SEQUENCE [LARGE SCALE GENOMIC DNA]</scope>
    <source>
        <strain>DSM 15242 / JCM 11007 / NBRC 100824 / MB4</strain>
    </source>
</reference>
<gene>
    <name evidence="1" type="primary">pyrC</name>
    <name type="ordered locus">TTE1533</name>
</gene>
<proteinExistence type="inferred from homology"/>
<protein>
    <recommendedName>
        <fullName evidence="1">Dihydroorotase</fullName>
        <shortName evidence="1">DHOase</shortName>
        <ecNumber evidence="1">3.5.2.3</ecNumber>
    </recommendedName>
</protein>
<feature type="chain" id="PRO_0000147265" description="Dihydroorotase">
    <location>
        <begin position="1"/>
        <end position="431"/>
    </location>
</feature>
<feature type="active site" evidence="1">
    <location>
        <position position="304"/>
    </location>
</feature>
<feature type="binding site" evidence="1">
    <location>
        <position position="59"/>
    </location>
    <ligand>
        <name>Zn(2+)</name>
        <dbReference type="ChEBI" id="CHEBI:29105"/>
        <label>1</label>
    </ligand>
</feature>
<feature type="binding site" evidence="1">
    <location>
        <begin position="61"/>
        <end position="63"/>
    </location>
    <ligand>
        <name>substrate</name>
    </ligand>
</feature>
<feature type="binding site" evidence="1">
    <location>
        <position position="61"/>
    </location>
    <ligand>
        <name>Zn(2+)</name>
        <dbReference type="ChEBI" id="CHEBI:29105"/>
        <label>1</label>
    </ligand>
</feature>
<feature type="binding site" evidence="1">
    <location>
        <position position="93"/>
    </location>
    <ligand>
        <name>substrate</name>
    </ligand>
</feature>
<feature type="binding site" evidence="1">
    <location>
        <position position="151"/>
    </location>
    <ligand>
        <name>Zn(2+)</name>
        <dbReference type="ChEBI" id="CHEBI:29105"/>
        <label>1</label>
    </ligand>
</feature>
<feature type="binding site" evidence="1">
    <location>
        <position position="151"/>
    </location>
    <ligand>
        <name>Zn(2+)</name>
        <dbReference type="ChEBI" id="CHEBI:29105"/>
        <label>2</label>
    </ligand>
</feature>
<feature type="binding site" evidence="1">
    <location>
        <position position="178"/>
    </location>
    <ligand>
        <name>Zn(2+)</name>
        <dbReference type="ChEBI" id="CHEBI:29105"/>
        <label>2</label>
    </ligand>
</feature>
<feature type="binding site" evidence="1">
    <location>
        <position position="231"/>
    </location>
    <ligand>
        <name>Zn(2+)</name>
        <dbReference type="ChEBI" id="CHEBI:29105"/>
        <label>2</label>
    </ligand>
</feature>
<feature type="binding site" evidence="1">
    <location>
        <position position="304"/>
    </location>
    <ligand>
        <name>Zn(2+)</name>
        <dbReference type="ChEBI" id="CHEBI:29105"/>
        <label>1</label>
    </ligand>
</feature>
<feature type="binding site" evidence="1">
    <location>
        <position position="308"/>
    </location>
    <ligand>
        <name>substrate</name>
    </ligand>
</feature>
<feature type="binding site" evidence="1">
    <location>
        <begin position="322"/>
        <end position="323"/>
    </location>
    <ligand>
        <name>substrate</name>
    </ligand>
</feature>
<organism>
    <name type="scientific">Caldanaerobacter subterraneus subsp. tengcongensis (strain DSM 15242 / JCM 11007 / NBRC 100824 / MB4)</name>
    <name type="common">Thermoanaerobacter tengcongensis</name>
    <dbReference type="NCBI Taxonomy" id="273068"/>
    <lineage>
        <taxon>Bacteria</taxon>
        <taxon>Bacillati</taxon>
        <taxon>Bacillota</taxon>
        <taxon>Clostridia</taxon>
        <taxon>Thermoanaerobacterales</taxon>
        <taxon>Thermoanaerobacteraceae</taxon>
        <taxon>Caldanaerobacter</taxon>
    </lineage>
</organism>